<organism>
    <name type="scientific">Hydrolagus colliei</name>
    <name type="common">Spotted ratfish</name>
    <name type="synonym">Chimaera colliei</name>
    <dbReference type="NCBI Taxonomy" id="7873"/>
    <lineage>
        <taxon>Eukaryota</taxon>
        <taxon>Metazoa</taxon>
        <taxon>Chordata</taxon>
        <taxon>Craniata</taxon>
        <taxon>Vertebrata</taxon>
        <taxon>Chondrichthyes</taxon>
        <taxon>Holocephali</taxon>
        <taxon>Chimaeriformes</taxon>
        <taxon>Chimaeridae</taxon>
        <taxon>Hydrolagus</taxon>
    </lineage>
</organism>
<reference key="1">
    <citation type="journal article" date="1986" name="FEBS Lett.">
        <title>The primary structure of ratfish insulin reveals an unusual mode of proinsulin processing.</title>
        <authorList>
            <person name="Conlon J.M."/>
            <person name="Dafgard E."/>
            <person name="Falkmer S."/>
            <person name="Thim L."/>
        </authorList>
    </citation>
    <scope>PROTEIN SEQUENCE</scope>
</reference>
<reference key="2">
    <citation type="journal article" date="1989" name="Gen. Comp. Endocrinol.">
        <title>Multiple molecular forms of insulin and glucagon-like peptide from the Pacific ratfish (Hydrolagus colliei).</title>
        <authorList>
            <person name="Conlon J.M."/>
            <person name="Goeke R."/>
            <person name="Andrews P.C."/>
            <person name="Thim L."/>
        </authorList>
    </citation>
    <scope>PROTEIN SEQUENCE</scope>
</reference>
<proteinExistence type="evidence at protein level"/>
<feature type="peptide" id="PRO_0000015822" description="Insulin B chain">
    <location>
        <begin position="1"/>
        <end position="38"/>
    </location>
</feature>
<feature type="peptide" id="PRO_0000015823" description="Insulin A chain">
    <location>
        <begin position="39"/>
        <end position="59"/>
    </location>
</feature>
<feature type="disulfide bond" description="Interchain (between B and A chains)">
    <location>
        <begin position="7"/>
        <end position="45"/>
    </location>
</feature>
<feature type="disulfide bond" description="Interchain (between B and A chains)">
    <location>
        <begin position="19"/>
        <end position="58"/>
    </location>
</feature>
<feature type="disulfide bond">
    <location>
        <begin position="44"/>
        <end position="49"/>
    </location>
</feature>
<feature type="non-consecutive residues" evidence="1">
    <location>
        <begin position="38"/>
        <end position="39"/>
    </location>
</feature>
<protein>
    <recommendedName>
        <fullName>Insulin</fullName>
    </recommendedName>
    <component>
        <recommendedName>
            <fullName>Insulin B chain</fullName>
        </recommendedName>
    </component>
    <component>
        <recommendedName>
            <fullName>Insulin A chain</fullName>
        </recommendedName>
    </component>
</protein>
<keyword id="KW-0119">Carbohydrate metabolism</keyword>
<keyword id="KW-0903">Direct protein sequencing</keyword>
<keyword id="KW-1015">Disulfide bond</keyword>
<keyword id="KW-0313">Glucose metabolism</keyword>
<keyword id="KW-0372">Hormone</keyword>
<keyword id="KW-0964">Secreted</keyword>
<evidence type="ECO:0000305" key="1"/>
<sequence length="59" mass="6606">VPTQRLCGSHLVDALYFVCGERGFFYSPKPIRELEPLLGIVEQCCHNTCSLANLEGYCN</sequence>
<name>INS_HYDCO</name>
<comment type="function">
    <text>Insulin decreases blood glucose concentration. It increases cell permeability to monosaccharides, amino acids and fatty acids. It accelerates glycolysis, the pentose phosphate cycle, and glycogen synthesis in liver.</text>
</comment>
<comment type="subunit">
    <text>Heterodimer of a B chain and an A chain linked by two disulfide bonds.</text>
</comment>
<comment type="subcellular location">
    <subcellularLocation>
        <location>Secreted</location>
    </subcellularLocation>
</comment>
<comment type="miscellaneous">
    <text>Due to a substitution of the Arg in position 31 by an Ile, this insulin B chain is longer than most other B chains and is processed differently.</text>
</comment>
<comment type="similarity">
    <text evidence="1">Belongs to the insulin family.</text>
</comment>
<accession>P68992</accession>
<accession>P09536</accession>
<dbReference type="PIR" id="S06474">
    <property type="entry name" value="INFI"/>
</dbReference>
<dbReference type="SMR" id="P68992"/>
<dbReference type="GO" id="GO:0005615">
    <property type="term" value="C:extracellular space"/>
    <property type="evidence" value="ECO:0007669"/>
    <property type="project" value="TreeGrafter"/>
</dbReference>
<dbReference type="GO" id="GO:0005179">
    <property type="term" value="F:hormone activity"/>
    <property type="evidence" value="ECO:0007669"/>
    <property type="project" value="UniProtKB-KW"/>
</dbReference>
<dbReference type="GO" id="GO:0006006">
    <property type="term" value="P:glucose metabolic process"/>
    <property type="evidence" value="ECO:0007669"/>
    <property type="project" value="UniProtKB-KW"/>
</dbReference>
<dbReference type="CDD" id="cd04367">
    <property type="entry name" value="IlGF_insulin_like"/>
    <property type="match status" value="1"/>
</dbReference>
<dbReference type="Gene3D" id="1.10.100.10">
    <property type="entry name" value="Insulin-like"/>
    <property type="match status" value="1"/>
</dbReference>
<dbReference type="InterPro" id="IPR004825">
    <property type="entry name" value="Insulin"/>
</dbReference>
<dbReference type="InterPro" id="IPR016179">
    <property type="entry name" value="Insulin-like"/>
</dbReference>
<dbReference type="InterPro" id="IPR036438">
    <property type="entry name" value="Insulin-like_sf"/>
</dbReference>
<dbReference type="InterPro" id="IPR022353">
    <property type="entry name" value="Insulin_CS"/>
</dbReference>
<dbReference type="InterPro" id="IPR022352">
    <property type="entry name" value="Insulin_family"/>
</dbReference>
<dbReference type="PANTHER" id="PTHR11454:SF9">
    <property type="entry name" value="INSULIN"/>
    <property type="match status" value="1"/>
</dbReference>
<dbReference type="PANTHER" id="PTHR11454">
    <property type="entry name" value="INSULIN/INSULIN GROWTH FACTOR"/>
    <property type="match status" value="1"/>
</dbReference>
<dbReference type="Pfam" id="PF00049">
    <property type="entry name" value="Insulin"/>
    <property type="match status" value="2"/>
</dbReference>
<dbReference type="PRINTS" id="PR00277">
    <property type="entry name" value="INSULIN"/>
</dbReference>
<dbReference type="PRINTS" id="PR00276">
    <property type="entry name" value="INSULINFAMLY"/>
</dbReference>
<dbReference type="SMART" id="SM00078">
    <property type="entry name" value="IlGF"/>
    <property type="match status" value="1"/>
</dbReference>
<dbReference type="SUPFAM" id="SSF56994">
    <property type="entry name" value="Insulin-like"/>
    <property type="match status" value="1"/>
</dbReference>
<dbReference type="PROSITE" id="PS00262">
    <property type="entry name" value="INSULIN"/>
    <property type="match status" value="1"/>
</dbReference>
<gene>
    <name type="primary">ins</name>
</gene>